<protein>
    <recommendedName>
        <fullName evidence="2">Small ribosomal subunit protein eS19B</fullName>
    </recommendedName>
    <alternativeName>
        <fullName>40S ribosomal protein S19b</fullName>
    </alternativeName>
</protein>
<dbReference type="EMBL" id="AE014297">
    <property type="protein sequence ID" value="AAN13960.1"/>
    <property type="molecule type" value="Genomic_DNA"/>
</dbReference>
<dbReference type="EMBL" id="AY119257">
    <property type="protein sequence ID" value="AAM51117.1"/>
    <property type="molecule type" value="mRNA"/>
</dbReference>
<dbReference type="RefSeq" id="NP_001262891.1">
    <property type="nucleotide sequence ID" value="NM_001275962.1"/>
</dbReference>
<dbReference type="RefSeq" id="NP_651195.1">
    <property type="nucleotide sequence ID" value="NM_142938.2"/>
</dbReference>
<dbReference type="SMR" id="Q7KS38"/>
<dbReference type="BioGRID" id="67766">
    <property type="interactions" value="10"/>
</dbReference>
<dbReference type="FunCoup" id="Q7KS38">
    <property type="interactions" value="1123"/>
</dbReference>
<dbReference type="IntAct" id="Q7KS38">
    <property type="interactions" value="17"/>
</dbReference>
<dbReference type="STRING" id="7227.FBpp0083905"/>
<dbReference type="PaxDb" id="7227-FBpp0083905"/>
<dbReference type="DNASU" id="42830"/>
<dbReference type="EnsemblMetazoa" id="FBtr0084519">
    <property type="protein sequence ID" value="FBpp0083905"/>
    <property type="gene ID" value="FBgn0039129"/>
</dbReference>
<dbReference type="EnsemblMetazoa" id="FBtr0332444">
    <property type="protein sequence ID" value="FBpp0304717"/>
    <property type="gene ID" value="FBgn0039129"/>
</dbReference>
<dbReference type="GeneID" id="42830"/>
<dbReference type="KEGG" id="dme:Dmel_CG5338"/>
<dbReference type="AGR" id="FB:FBgn0039129"/>
<dbReference type="CTD" id="42830"/>
<dbReference type="FlyBase" id="FBgn0039129">
    <property type="gene designation" value="RpS19b"/>
</dbReference>
<dbReference type="VEuPathDB" id="VectorBase:FBgn0039129"/>
<dbReference type="eggNOG" id="KOG3411">
    <property type="taxonomic scope" value="Eukaryota"/>
</dbReference>
<dbReference type="GeneTree" id="ENSGT00390000013102"/>
<dbReference type="HOGENOM" id="CLU_108559_0_1_1"/>
<dbReference type="InParanoid" id="Q7KS38"/>
<dbReference type="OMA" id="ICIGDDF"/>
<dbReference type="OrthoDB" id="428974at2759"/>
<dbReference type="PhylomeDB" id="Q7KS38"/>
<dbReference type="SignaLink" id="Q7KS38"/>
<dbReference type="BioGRID-ORCS" id="42830">
    <property type="hits" value="0 hits in 1 CRISPR screen"/>
</dbReference>
<dbReference type="GenomeRNAi" id="42830"/>
<dbReference type="PRO" id="PR:Q7KS38"/>
<dbReference type="Proteomes" id="UP000000803">
    <property type="component" value="Chromosome 3R"/>
</dbReference>
<dbReference type="Bgee" id="FBgn0039129">
    <property type="expression patterns" value="Expressed in spermatocyte in testis and 23 other cell types or tissues"/>
</dbReference>
<dbReference type="ExpressionAtlas" id="Q7KS38">
    <property type="expression patterns" value="baseline and differential"/>
</dbReference>
<dbReference type="GO" id="GO:0022627">
    <property type="term" value="C:cytosolic small ribosomal subunit"/>
    <property type="evidence" value="ECO:0000318"/>
    <property type="project" value="GO_Central"/>
</dbReference>
<dbReference type="GO" id="GO:0003723">
    <property type="term" value="F:RNA binding"/>
    <property type="evidence" value="ECO:0000318"/>
    <property type="project" value="GO_Central"/>
</dbReference>
<dbReference type="GO" id="GO:0003735">
    <property type="term" value="F:structural constituent of ribosome"/>
    <property type="evidence" value="ECO:0000318"/>
    <property type="project" value="GO_Central"/>
</dbReference>
<dbReference type="GO" id="GO:0002181">
    <property type="term" value="P:cytoplasmic translation"/>
    <property type="evidence" value="ECO:0000304"/>
    <property type="project" value="FlyBase"/>
</dbReference>
<dbReference type="GO" id="GO:0000028">
    <property type="term" value="P:ribosomal small subunit assembly"/>
    <property type="evidence" value="ECO:0000318"/>
    <property type="project" value="GO_Central"/>
</dbReference>
<dbReference type="FunFam" id="1.10.10.10:FF:000118">
    <property type="entry name" value="40S ribosomal protein S19"/>
    <property type="match status" value="1"/>
</dbReference>
<dbReference type="Gene3D" id="1.10.10.10">
    <property type="entry name" value="Winged helix-like DNA-binding domain superfamily/Winged helix DNA-binding domain"/>
    <property type="match status" value="1"/>
</dbReference>
<dbReference type="InterPro" id="IPR001266">
    <property type="entry name" value="Ribosomal_eS19"/>
</dbReference>
<dbReference type="InterPro" id="IPR018277">
    <property type="entry name" value="Ribosomal_eS19_CS"/>
</dbReference>
<dbReference type="InterPro" id="IPR036388">
    <property type="entry name" value="WH-like_DNA-bd_sf"/>
</dbReference>
<dbReference type="InterPro" id="IPR036390">
    <property type="entry name" value="WH_DNA-bd_sf"/>
</dbReference>
<dbReference type="PANTHER" id="PTHR11710">
    <property type="entry name" value="40S RIBOSOMAL PROTEIN S19"/>
    <property type="match status" value="1"/>
</dbReference>
<dbReference type="PANTHER" id="PTHR11710:SF0">
    <property type="entry name" value="40S RIBOSOMAL PROTEIN S19"/>
    <property type="match status" value="1"/>
</dbReference>
<dbReference type="Pfam" id="PF01090">
    <property type="entry name" value="Ribosomal_S19e"/>
    <property type="match status" value="1"/>
</dbReference>
<dbReference type="SMART" id="SM01413">
    <property type="entry name" value="Ribosomal_S19e"/>
    <property type="match status" value="1"/>
</dbReference>
<dbReference type="SUPFAM" id="SSF46785">
    <property type="entry name" value="Winged helix' DNA-binding domain"/>
    <property type="match status" value="1"/>
</dbReference>
<dbReference type="PROSITE" id="PS00628">
    <property type="entry name" value="RIBOSOMAL_S19E"/>
    <property type="match status" value="1"/>
</dbReference>
<name>RS19B_DROME</name>
<comment type="similarity">
    <text evidence="2">Belongs to the eukaryotic ribosomal protein eS19 family.</text>
</comment>
<reference key="1">
    <citation type="journal article" date="2000" name="Science">
        <title>The genome sequence of Drosophila melanogaster.</title>
        <authorList>
            <person name="Adams M.D."/>
            <person name="Celniker S.E."/>
            <person name="Holt R.A."/>
            <person name="Evans C.A."/>
            <person name="Gocayne J.D."/>
            <person name="Amanatides P.G."/>
            <person name="Scherer S.E."/>
            <person name="Li P.W."/>
            <person name="Hoskins R.A."/>
            <person name="Galle R.F."/>
            <person name="George R.A."/>
            <person name="Lewis S.E."/>
            <person name="Richards S."/>
            <person name="Ashburner M."/>
            <person name="Henderson S.N."/>
            <person name="Sutton G.G."/>
            <person name="Wortman J.R."/>
            <person name="Yandell M.D."/>
            <person name="Zhang Q."/>
            <person name="Chen L.X."/>
            <person name="Brandon R.C."/>
            <person name="Rogers Y.-H.C."/>
            <person name="Blazej R.G."/>
            <person name="Champe M."/>
            <person name="Pfeiffer B.D."/>
            <person name="Wan K.H."/>
            <person name="Doyle C."/>
            <person name="Baxter E.G."/>
            <person name="Helt G."/>
            <person name="Nelson C.R."/>
            <person name="Miklos G.L.G."/>
            <person name="Abril J.F."/>
            <person name="Agbayani A."/>
            <person name="An H.-J."/>
            <person name="Andrews-Pfannkoch C."/>
            <person name="Baldwin D."/>
            <person name="Ballew R.M."/>
            <person name="Basu A."/>
            <person name="Baxendale J."/>
            <person name="Bayraktaroglu L."/>
            <person name="Beasley E.M."/>
            <person name="Beeson K.Y."/>
            <person name="Benos P.V."/>
            <person name="Berman B.P."/>
            <person name="Bhandari D."/>
            <person name="Bolshakov S."/>
            <person name="Borkova D."/>
            <person name="Botchan M.R."/>
            <person name="Bouck J."/>
            <person name="Brokstein P."/>
            <person name="Brottier P."/>
            <person name="Burtis K.C."/>
            <person name="Busam D.A."/>
            <person name="Butler H."/>
            <person name="Cadieu E."/>
            <person name="Center A."/>
            <person name="Chandra I."/>
            <person name="Cherry J.M."/>
            <person name="Cawley S."/>
            <person name="Dahlke C."/>
            <person name="Davenport L.B."/>
            <person name="Davies P."/>
            <person name="de Pablos B."/>
            <person name="Delcher A."/>
            <person name="Deng Z."/>
            <person name="Mays A.D."/>
            <person name="Dew I."/>
            <person name="Dietz S.M."/>
            <person name="Dodson K."/>
            <person name="Doup L.E."/>
            <person name="Downes M."/>
            <person name="Dugan-Rocha S."/>
            <person name="Dunkov B.C."/>
            <person name="Dunn P."/>
            <person name="Durbin K.J."/>
            <person name="Evangelista C.C."/>
            <person name="Ferraz C."/>
            <person name="Ferriera S."/>
            <person name="Fleischmann W."/>
            <person name="Fosler C."/>
            <person name="Gabrielian A.E."/>
            <person name="Garg N.S."/>
            <person name="Gelbart W.M."/>
            <person name="Glasser K."/>
            <person name="Glodek A."/>
            <person name="Gong F."/>
            <person name="Gorrell J.H."/>
            <person name="Gu Z."/>
            <person name="Guan P."/>
            <person name="Harris M."/>
            <person name="Harris N.L."/>
            <person name="Harvey D.A."/>
            <person name="Heiman T.J."/>
            <person name="Hernandez J.R."/>
            <person name="Houck J."/>
            <person name="Hostin D."/>
            <person name="Houston K.A."/>
            <person name="Howland T.J."/>
            <person name="Wei M.-H."/>
            <person name="Ibegwam C."/>
            <person name="Jalali M."/>
            <person name="Kalush F."/>
            <person name="Karpen G.H."/>
            <person name="Ke Z."/>
            <person name="Kennison J.A."/>
            <person name="Ketchum K.A."/>
            <person name="Kimmel B.E."/>
            <person name="Kodira C.D."/>
            <person name="Kraft C.L."/>
            <person name="Kravitz S."/>
            <person name="Kulp D."/>
            <person name="Lai Z."/>
            <person name="Lasko P."/>
            <person name="Lei Y."/>
            <person name="Levitsky A.A."/>
            <person name="Li J.H."/>
            <person name="Li Z."/>
            <person name="Liang Y."/>
            <person name="Lin X."/>
            <person name="Liu X."/>
            <person name="Mattei B."/>
            <person name="McIntosh T.C."/>
            <person name="McLeod M.P."/>
            <person name="McPherson D."/>
            <person name="Merkulov G."/>
            <person name="Milshina N.V."/>
            <person name="Mobarry C."/>
            <person name="Morris J."/>
            <person name="Moshrefi A."/>
            <person name="Mount S.M."/>
            <person name="Moy M."/>
            <person name="Murphy B."/>
            <person name="Murphy L."/>
            <person name="Muzny D.M."/>
            <person name="Nelson D.L."/>
            <person name="Nelson D.R."/>
            <person name="Nelson K.A."/>
            <person name="Nixon K."/>
            <person name="Nusskern D.R."/>
            <person name="Pacleb J.M."/>
            <person name="Palazzolo M."/>
            <person name="Pittman G.S."/>
            <person name="Pan S."/>
            <person name="Pollard J."/>
            <person name="Puri V."/>
            <person name="Reese M.G."/>
            <person name="Reinert K."/>
            <person name="Remington K."/>
            <person name="Saunders R.D.C."/>
            <person name="Scheeler F."/>
            <person name="Shen H."/>
            <person name="Shue B.C."/>
            <person name="Siden-Kiamos I."/>
            <person name="Simpson M."/>
            <person name="Skupski M.P."/>
            <person name="Smith T.J."/>
            <person name="Spier E."/>
            <person name="Spradling A.C."/>
            <person name="Stapleton M."/>
            <person name="Strong R."/>
            <person name="Sun E."/>
            <person name="Svirskas R."/>
            <person name="Tector C."/>
            <person name="Turner R."/>
            <person name="Venter E."/>
            <person name="Wang A.H."/>
            <person name="Wang X."/>
            <person name="Wang Z.-Y."/>
            <person name="Wassarman D.A."/>
            <person name="Weinstock G.M."/>
            <person name="Weissenbach J."/>
            <person name="Williams S.M."/>
            <person name="Woodage T."/>
            <person name="Worley K.C."/>
            <person name="Wu D."/>
            <person name="Yang S."/>
            <person name="Yao Q.A."/>
            <person name="Ye J."/>
            <person name="Yeh R.-F."/>
            <person name="Zaveri J.S."/>
            <person name="Zhan M."/>
            <person name="Zhang G."/>
            <person name="Zhao Q."/>
            <person name="Zheng L."/>
            <person name="Zheng X.H."/>
            <person name="Zhong F.N."/>
            <person name="Zhong W."/>
            <person name="Zhou X."/>
            <person name="Zhu S.C."/>
            <person name="Zhu X."/>
            <person name="Smith H.O."/>
            <person name="Gibbs R.A."/>
            <person name="Myers E.W."/>
            <person name="Rubin G.M."/>
            <person name="Venter J.C."/>
        </authorList>
    </citation>
    <scope>NUCLEOTIDE SEQUENCE [LARGE SCALE GENOMIC DNA]</scope>
    <source>
        <strain>Berkeley</strain>
    </source>
</reference>
<reference key="2">
    <citation type="journal article" date="2002" name="Genome Biol.">
        <title>Annotation of the Drosophila melanogaster euchromatic genome: a systematic review.</title>
        <authorList>
            <person name="Misra S."/>
            <person name="Crosby M.A."/>
            <person name="Mungall C.J."/>
            <person name="Matthews B.B."/>
            <person name="Campbell K.S."/>
            <person name="Hradecky P."/>
            <person name="Huang Y."/>
            <person name="Kaminker J.S."/>
            <person name="Millburn G.H."/>
            <person name="Prochnik S.E."/>
            <person name="Smith C.D."/>
            <person name="Tupy J.L."/>
            <person name="Whitfield E.J."/>
            <person name="Bayraktaroglu L."/>
            <person name="Berman B.P."/>
            <person name="Bettencourt B.R."/>
            <person name="Celniker S.E."/>
            <person name="de Grey A.D.N.J."/>
            <person name="Drysdale R.A."/>
            <person name="Harris N.L."/>
            <person name="Richter J."/>
            <person name="Russo S."/>
            <person name="Schroeder A.J."/>
            <person name="Shu S.Q."/>
            <person name="Stapleton M."/>
            <person name="Yamada C."/>
            <person name="Ashburner M."/>
            <person name="Gelbart W.M."/>
            <person name="Rubin G.M."/>
            <person name="Lewis S.E."/>
        </authorList>
    </citation>
    <scope>GENOME REANNOTATION</scope>
    <source>
        <strain>Berkeley</strain>
    </source>
</reference>
<reference key="3">
    <citation type="journal article" date="2002" name="Genome Biol.">
        <title>A Drosophila full-length cDNA resource.</title>
        <authorList>
            <person name="Stapleton M."/>
            <person name="Carlson J.W."/>
            <person name="Brokstein P."/>
            <person name="Yu C."/>
            <person name="Champe M."/>
            <person name="George R.A."/>
            <person name="Guarin H."/>
            <person name="Kronmiller B."/>
            <person name="Pacleb J.M."/>
            <person name="Park S."/>
            <person name="Wan K.H."/>
            <person name="Rubin G.M."/>
            <person name="Celniker S.E."/>
        </authorList>
    </citation>
    <scope>NUCLEOTIDE SEQUENCE [LARGE SCALE MRNA]</scope>
    <source>
        <strain>Berkeley</strain>
        <tissue>Embryo</tissue>
    </source>
</reference>
<evidence type="ECO:0000250" key="1"/>
<evidence type="ECO:0000305" key="2"/>
<proteinExistence type="evidence at transcript level"/>
<feature type="initiator methionine" description="Removed" evidence="1">
    <location>
        <position position="1"/>
    </location>
</feature>
<feature type="chain" id="PRO_0000153825" description="Small ribosomal subunit protein eS19B">
    <location>
        <begin position="2"/>
        <end position="155"/>
    </location>
</feature>
<sequence length="155" mass="17362">MPGVTVKEIDQHVLTKNMAAFLKKSGKIFVPEQAVYMKTGKFKETAPTDDDWFYTRCASIMRHLYLRSPAGVGAFTKVYSGRKRNGVRPSKHCRSSDGCIRKALQALEAANMVERHPDGGRKLTPQGQRNLDRIANKIVAKQRERSAPVSMIITT</sequence>
<accession>Q7KS38</accession>
<organism>
    <name type="scientific">Drosophila melanogaster</name>
    <name type="common">Fruit fly</name>
    <dbReference type="NCBI Taxonomy" id="7227"/>
    <lineage>
        <taxon>Eukaryota</taxon>
        <taxon>Metazoa</taxon>
        <taxon>Ecdysozoa</taxon>
        <taxon>Arthropoda</taxon>
        <taxon>Hexapoda</taxon>
        <taxon>Insecta</taxon>
        <taxon>Pterygota</taxon>
        <taxon>Neoptera</taxon>
        <taxon>Endopterygota</taxon>
        <taxon>Diptera</taxon>
        <taxon>Brachycera</taxon>
        <taxon>Muscomorpha</taxon>
        <taxon>Ephydroidea</taxon>
        <taxon>Drosophilidae</taxon>
        <taxon>Drosophila</taxon>
        <taxon>Sophophora</taxon>
    </lineage>
</organism>
<gene>
    <name type="primary">RpS19b</name>
    <name type="synonym">RpS19</name>
    <name type="ORF">CG5338</name>
</gene>
<keyword id="KW-1185">Reference proteome</keyword>
<keyword id="KW-0687">Ribonucleoprotein</keyword>
<keyword id="KW-0689">Ribosomal protein</keyword>